<name>FABZ_BURTA</name>
<sequence length="160" mass="18087">MRRTIMSTEKINFDIHKILTLLPHRYPILLVDRVLELEPHKSIKALKNVTVNEPFFTGHFPKRPVMPGVLIIEALAQAAALLTFAEAEPKDPENTLYYFVGIDNARFKRVVEPGDQLILNVTFERYIRGIWKFKAVAEVDGKVAAEAELMCTVKTADAAP</sequence>
<keyword id="KW-0002">3D-structure</keyword>
<keyword id="KW-0963">Cytoplasm</keyword>
<keyword id="KW-0441">Lipid A biosynthesis</keyword>
<keyword id="KW-0444">Lipid biosynthesis</keyword>
<keyword id="KW-0443">Lipid metabolism</keyword>
<keyword id="KW-0456">Lyase</keyword>
<evidence type="ECO:0000255" key="1">
    <source>
        <dbReference type="HAMAP-Rule" id="MF_00406"/>
    </source>
</evidence>
<evidence type="ECO:0007829" key="2">
    <source>
        <dbReference type="PDB" id="4H4G"/>
    </source>
</evidence>
<accession>Q2SWY7</accession>
<gene>
    <name evidence="1" type="primary">fabZ</name>
    <name type="ordered locus">BTH_I2038</name>
</gene>
<protein>
    <recommendedName>
        <fullName evidence="1">3-hydroxyacyl-[acyl-carrier-protein] dehydratase FabZ</fullName>
        <ecNumber evidence="1">4.2.1.59</ecNumber>
    </recommendedName>
    <alternativeName>
        <fullName evidence="1">(3R)-hydroxymyristoyl-[acyl-carrier-protein] dehydratase</fullName>
        <shortName evidence="1">(3R)-hydroxymyristoyl-ACP dehydrase</shortName>
    </alternativeName>
    <alternativeName>
        <fullName evidence="1">Beta-hydroxyacyl-ACP dehydratase</fullName>
    </alternativeName>
</protein>
<organism>
    <name type="scientific">Burkholderia thailandensis (strain ATCC 700388 / DSM 13276 / CCUG 48851 / CIP 106301 / E264)</name>
    <dbReference type="NCBI Taxonomy" id="271848"/>
    <lineage>
        <taxon>Bacteria</taxon>
        <taxon>Pseudomonadati</taxon>
        <taxon>Pseudomonadota</taxon>
        <taxon>Betaproteobacteria</taxon>
        <taxon>Burkholderiales</taxon>
        <taxon>Burkholderiaceae</taxon>
        <taxon>Burkholderia</taxon>
        <taxon>pseudomallei group</taxon>
    </lineage>
</organism>
<reference key="1">
    <citation type="journal article" date="2005" name="BMC Genomics">
        <title>Bacterial genome adaptation to niches: divergence of the potential virulence genes in three Burkholderia species of different survival strategies.</title>
        <authorList>
            <person name="Kim H.S."/>
            <person name="Schell M.A."/>
            <person name="Yu Y."/>
            <person name="Ulrich R.L."/>
            <person name="Sarria S.H."/>
            <person name="Nierman W.C."/>
            <person name="DeShazer D."/>
        </authorList>
    </citation>
    <scope>NUCLEOTIDE SEQUENCE [LARGE SCALE GENOMIC DNA]</scope>
    <source>
        <strain>ATCC 700388 / DSM 13276 / CCUG 48851 / CIP 106301 / E264</strain>
    </source>
</reference>
<feature type="chain" id="PRO_0000242887" description="3-hydroxyacyl-[acyl-carrier-protein] dehydratase FabZ">
    <location>
        <begin position="1"/>
        <end position="160"/>
    </location>
</feature>
<feature type="active site" evidence="1">
    <location>
        <position position="59"/>
    </location>
</feature>
<feature type="helix" evidence="2">
    <location>
        <begin position="15"/>
        <end position="21"/>
    </location>
</feature>
<feature type="strand" evidence="2">
    <location>
        <begin position="33"/>
        <end position="38"/>
    </location>
</feature>
<feature type="turn" evidence="2">
    <location>
        <begin position="39"/>
        <end position="41"/>
    </location>
</feature>
<feature type="strand" evidence="2">
    <location>
        <begin position="42"/>
        <end position="48"/>
    </location>
</feature>
<feature type="helix" evidence="2">
    <location>
        <begin position="54"/>
        <end position="57"/>
    </location>
</feature>
<feature type="helix" evidence="2">
    <location>
        <begin position="68"/>
        <end position="84"/>
    </location>
</feature>
<feature type="strand" evidence="2">
    <location>
        <begin position="97"/>
        <end position="107"/>
    </location>
</feature>
<feature type="strand" evidence="2">
    <location>
        <begin position="116"/>
        <end position="127"/>
    </location>
</feature>
<feature type="strand" evidence="2">
    <location>
        <begin position="130"/>
        <end position="139"/>
    </location>
</feature>
<feature type="strand" evidence="2">
    <location>
        <begin position="142"/>
        <end position="153"/>
    </location>
</feature>
<comment type="function">
    <text evidence="1">Involved in unsaturated fatty acids biosynthesis. Catalyzes the dehydration of short chain beta-hydroxyacyl-ACPs and long chain saturated and unsaturated beta-hydroxyacyl-ACPs.</text>
</comment>
<comment type="catalytic activity">
    <reaction evidence="1">
        <text>a (3R)-hydroxyacyl-[ACP] = a (2E)-enoyl-[ACP] + H2O</text>
        <dbReference type="Rhea" id="RHEA:13097"/>
        <dbReference type="Rhea" id="RHEA-COMP:9925"/>
        <dbReference type="Rhea" id="RHEA-COMP:9945"/>
        <dbReference type="ChEBI" id="CHEBI:15377"/>
        <dbReference type="ChEBI" id="CHEBI:78784"/>
        <dbReference type="ChEBI" id="CHEBI:78827"/>
        <dbReference type="EC" id="4.2.1.59"/>
    </reaction>
</comment>
<comment type="subcellular location">
    <subcellularLocation>
        <location evidence="1">Cytoplasm</location>
    </subcellularLocation>
</comment>
<comment type="similarity">
    <text evidence="1">Belongs to the thioester dehydratase family. FabZ subfamily.</text>
</comment>
<proteinExistence type="evidence at protein level"/>
<dbReference type="EC" id="4.2.1.59" evidence="1"/>
<dbReference type="EMBL" id="CP000086">
    <property type="protein sequence ID" value="ABC39413.1"/>
    <property type="molecule type" value="Genomic_DNA"/>
</dbReference>
<dbReference type="PDB" id="4H4G">
    <property type="method" value="X-ray"/>
    <property type="resolution" value="2.65 A"/>
    <property type="chains" value="A/B/C/D/E/F/G/H/I=1-160"/>
</dbReference>
<dbReference type="PDBsum" id="4H4G"/>
<dbReference type="SMR" id="Q2SWY7"/>
<dbReference type="KEGG" id="bte:BTH_I2038"/>
<dbReference type="HOGENOM" id="CLU_078912_1_0_4"/>
<dbReference type="EvolutionaryTrace" id="Q2SWY7"/>
<dbReference type="Proteomes" id="UP000001930">
    <property type="component" value="Chromosome I"/>
</dbReference>
<dbReference type="GO" id="GO:0005737">
    <property type="term" value="C:cytoplasm"/>
    <property type="evidence" value="ECO:0007669"/>
    <property type="project" value="UniProtKB-SubCell"/>
</dbReference>
<dbReference type="GO" id="GO:0016020">
    <property type="term" value="C:membrane"/>
    <property type="evidence" value="ECO:0007669"/>
    <property type="project" value="GOC"/>
</dbReference>
<dbReference type="GO" id="GO:0019171">
    <property type="term" value="F:(3R)-hydroxyacyl-[acyl-carrier-protein] dehydratase activity"/>
    <property type="evidence" value="ECO:0007669"/>
    <property type="project" value="UniProtKB-EC"/>
</dbReference>
<dbReference type="GO" id="GO:0006633">
    <property type="term" value="P:fatty acid biosynthetic process"/>
    <property type="evidence" value="ECO:0007669"/>
    <property type="project" value="UniProtKB-UniRule"/>
</dbReference>
<dbReference type="GO" id="GO:0009245">
    <property type="term" value="P:lipid A biosynthetic process"/>
    <property type="evidence" value="ECO:0007669"/>
    <property type="project" value="UniProtKB-UniRule"/>
</dbReference>
<dbReference type="CDD" id="cd01288">
    <property type="entry name" value="FabZ"/>
    <property type="match status" value="1"/>
</dbReference>
<dbReference type="FunFam" id="3.10.129.10:FF:000001">
    <property type="entry name" value="3-hydroxyacyl-[acyl-carrier-protein] dehydratase FabZ"/>
    <property type="match status" value="1"/>
</dbReference>
<dbReference type="Gene3D" id="3.10.129.10">
    <property type="entry name" value="Hotdog Thioesterase"/>
    <property type="match status" value="1"/>
</dbReference>
<dbReference type="HAMAP" id="MF_00406">
    <property type="entry name" value="FabZ"/>
    <property type="match status" value="1"/>
</dbReference>
<dbReference type="InterPro" id="IPR013114">
    <property type="entry name" value="FabA_FabZ"/>
</dbReference>
<dbReference type="InterPro" id="IPR010084">
    <property type="entry name" value="FabZ"/>
</dbReference>
<dbReference type="InterPro" id="IPR029069">
    <property type="entry name" value="HotDog_dom_sf"/>
</dbReference>
<dbReference type="NCBIfam" id="TIGR01750">
    <property type="entry name" value="fabZ"/>
    <property type="match status" value="1"/>
</dbReference>
<dbReference type="NCBIfam" id="NF000582">
    <property type="entry name" value="PRK00006.1"/>
    <property type="match status" value="1"/>
</dbReference>
<dbReference type="PANTHER" id="PTHR30272">
    <property type="entry name" value="3-HYDROXYACYL-[ACYL-CARRIER-PROTEIN] DEHYDRATASE"/>
    <property type="match status" value="1"/>
</dbReference>
<dbReference type="PANTHER" id="PTHR30272:SF1">
    <property type="entry name" value="3-HYDROXYACYL-[ACYL-CARRIER-PROTEIN] DEHYDRATASE"/>
    <property type="match status" value="1"/>
</dbReference>
<dbReference type="Pfam" id="PF07977">
    <property type="entry name" value="FabA"/>
    <property type="match status" value="1"/>
</dbReference>
<dbReference type="SUPFAM" id="SSF54637">
    <property type="entry name" value="Thioesterase/thiol ester dehydrase-isomerase"/>
    <property type="match status" value="1"/>
</dbReference>